<organism>
    <name type="scientific">Homo sapiens</name>
    <name type="common">Human</name>
    <dbReference type="NCBI Taxonomy" id="9606"/>
    <lineage>
        <taxon>Eukaryota</taxon>
        <taxon>Metazoa</taxon>
        <taxon>Chordata</taxon>
        <taxon>Craniata</taxon>
        <taxon>Vertebrata</taxon>
        <taxon>Euteleostomi</taxon>
        <taxon>Mammalia</taxon>
        <taxon>Eutheria</taxon>
        <taxon>Euarchontoglires</taxon>
        <taxon>Primates</taxon>
        <taxon>Haplorrhini</taxon>
        <taxon>Catarrhini</taxon>
        <taxon>Hominidae</taxon>
        <taxon>Homo</taxon>
    </lineage>
</organism>
<comment type="function">
    <text>Important modulator in the HLA class II restricted antigen presentation pathway by interaction with the HLA-DM molecule in B-cells. Modifies peptide exchange activity of HLA-DM.</text>
</comment>
<comment type="subunit">
    <text>Heterodimer of an alpha chain (DOA) and a beta chain (DOB). Forms a heterotetrameric complex with an HLA-DM molecule during intracellular transport in endosomal/lysosomal compartments in B-cells.</text>
</comment>
<comment type="subcellular location">
    <subcellularLocation>
        <location>Endosome membrane</location>
        <topology>Single-pass type I membrane protein</topology>
    </subcellularLocation>
    <subcellularLocation>
        <location>Lysosome membrane</location>
        <topology>Single-pass type I membrane protein</topology>
    </subcellularLocation>
    <text>Complexes with HLA-DM molecule during intracellular transport and in endosomal/lysosomal compartments. Heterotetramerization is necessary to exit the ER.</text>
</comment>
<comment type="polymorphism">
    <text>The following alleles of DOB are known: DOB*01:01, DOB*01:02, DOB*01:03 and DOB*01:04. The sequence shown is that of DOB*01:01.</text>
</comment>
<comment type="similarity">
    <text evidence="5">Belongs to the MHC class II family.</text>
</comment>
<name>DOB_HUMAN</name>
<evidence type="ECO:0000255" key="1"/>
<evidence type="ECO:0000255" key="2">
    <source>
        <dbReference type="PROSITE-ProRule" id="PRU00114"/>
    </source>
</evidence>
<evidence type="ECO:0000269" key="3">
    <source>
    </source>
</evidence>
<evidence type="ECO:0000269" key="4">
    <source ref="4"/>
</evidence>
<evidence type="ECO:0000305" key="5"/>
<evidence type="ECO:0007829" key="6">
    <source>
        <dbReference type="PDB" id="4I0P"/>
    </source>
</evidence>
<sequence length="273" mass="30822">MGSGWVPWVVALLVNLTRLDSSMTQGTDSPEDFVIQAKADCYFTNGTEKVQFVVRFIFNLEEYVRFDSDVGMFVALTKLGQPDAEQWNSRLDLLERSRQAVDGVCRHNYRLGAPFTVGRKVQPEVTVYPERTPLLHQHNLLHCSVTGFYPGDIKIKWFLNGQEERAGVMSTGPIRNGDWTFQTVVMLEMTPELGHVYTCLVDHSSLLSPVSVEWRAQSEYSWRKMLSGIAAFLLGLIFLLVGIVIQLRAQKGYVRTQMSGNEVSRAVLLPQSC</sequence>
<dbReference type="EMBL" id="X03066">
    <property type="protein sequence ID" value="CAA26870.1"/>
    <property type="molecule type" value="mRNA"/>
</dbReference>
<dbReference type="EMBL" id="M26040">
    <property type="protein sequence ID" value="AAA59718.1"/>
    <property type="molecule type" value="mRNA"/>
</dbReference>
<dbReference type="EMBL" id="X66401">
    <property type="protein sequence ID" value="CAA47028.1"/>
    <property type="molecule type" value="Genomic_DNA"/>
</dbReference>
<dbReference type="EMBL" id="CR541832">
    <property type="protein sequence ID" value="CAG46631.1"/>
    <property type="molecule type" value="mRNA"/>
</dbReference>
<dbReference type="EMBL" id="CR788227">
    <property type="status" value="NOT_ANNOTATED_CDS"/>
    <property type="molecule type" value="Genomic_DNA"/>
</dbReference>
<dbReference type="EMBL" id="BC006097">
    <property type="protein sequence ID" value="AAH06097.1"/>
    <property type="molecule type" value="mRNA"/>
</dbReference>
<dbReference type="EMBL" id="L29472">
    <property type="protein sequence ID" value="AAA59717.1"/>
    <property type="molecule type" value="Genomic_DNA"/>
</dbReference>
<dbReference type="EMBL" id="X87344">
    <property type="protein sequence ID" value="CAA60789.1"/>
    <property type="molecule type" value="Genomic_DNA"/>
</dbReference>
<dbReference type="EMBL" id="AB035252">
    <property type="status" value="NOT_ANNOTATED_CDS"/>
    <property type="molecule type" value="Genomic_DNA"/>
</dbReference>
<dbReference type="CCDS" id="CCDS4754.1"/>
<dbReference type="PIR" id="S27335">
    <property type="entry name" value="A24669"/>
</dbReference>
<dbReference type="RefSeq" id="NP_002111.1">
    <property type="nucleotide sequence ID" value="NM_002120.4"/>
</dbReference>
<dbReference type="PDB" id="4I0P">
    <property type="method" value="X-ray"/>
    <property type="resolution" value="3.20 A"/>
    <property type="chains" value="D/H=30-218"/>
</dbReference>
<dbReference type="PDBsum" id="4I0P"/>
<dbReference type="SMR" id="P13765"/>
<dbReference type="BioGRID" id="109357">
    <property type="interactions" value="3"/>
</dbReference>
<dbReference type="DIP" id="DIP-60117N"/>
<dbReference type="FunCoup" id="P13765">
    <property type="interactions" value="437"/>
</dbReference>
<dbReference type="IntAct" id="P13765">
    <property type="interactions" value="3"/>
</dbReference>
<dbReference type="STRING" id="9606.ENSP00000496848"/>
<dbReference type="GlyCosmos" id="P13765">
    <property type="glycosylation" value="1 site, No reported glycans"/>
</dbReference>
<dbReference type="GlyGen" id="P13765">
    <property type="glycosylation" value="1 site"/>
</dbReference>
<dbReference type="iPTMnet" id="P13765"/>
<dbReference type="PhosphoSitePlus" id="P13765"/>
<dbReference type="BioMuta" id="HLA-DOB"/>
<dbReference type="DMDM" id="122261"/>
<dbReference type="MassIVE" id="P13765"/>
<dbReference type="PaxDb" id="9606-ENSP00000390020"/>
<dbReference type="PeptideAtlas" id="P13765"/>
<dbReference type="ProteomicsDB" id="52985"/>
<dbReference type="Antibodypedia" id="34891">
    <property type="antibodies" value="193 antibodies from 24 providers"/>
</dbReference>
<dbReference type="DNASU" id="3112"/>
<dbReference type="Ensembl" id="ENST00000426644.6">
    <property type="protein sequence ID" value="ENSP00000395780.2"/>
    <property type="gene ID" value="ENSG00000243612.5"/>
</dbReference>
<dbReference type="Ensembl" id="ENST00000438763.7">
    <property type="protein sequence ID" value="ENSP00000390020.2"/>
    <property type="gene ID" value="ENSG00000241106.8"/>
</dbReference>
<dbReference type="Ensembl" id="ENST00000447178.6">
    <property type="protein sequence ID" value="ENSP00000405108.2"/>
    <property type="gene ID" value="ENSG00000241386.6"/>
</dbReference>
<dbReference type="Ensembl" id="ENST00000454286.6">
    <property type="protein sequence ID" value="ENSP00000397268.2"/>
    <property type="gene ID" value="ENSG00000243496.6"/>
</dbReference>
<dbReference type="Ensembl" id="ENST00000454969.6">
    <property type="protein sequence ID" value="ENSP00000410390.2"/>
    <property type="gene ID" value="ENSG00000241910.5"/>
</dbReference>
<dbReference type="Ensembl" id="ENST00000456406.6">
    <property type="protein sequence ID" value="ENSP00000394783.2"/>
    <property type="gene ID" value="ENSG00000239457.6"/>
</dbReference>
<dbReference type="Ensembl" id="ENST00000648009.1">
    <property type="protein sequence ID" value="ENSP00000496848.1"/>
    <property type="gene ID" value="ENSG00000241106.8"/>
</dbReference>
<dbReference type="GeneID" id="3112"/>
<dbReference type="KEGG" id="hsa:3112"/>
<dbReference type="MANE-Select" id="ENST00000438763.7">
    <property type="protein sequence ID" value="ENSP00000390020.2"/>
    <property type="RefSeq nucleotide sequence ID" value="NM_002120.4"/>
    <property type="RefSeq protein sequence ID" value="NP_002111.1"/>
</dbReference>
<dbReference type="UCSC" id="uc011gkh.2">
    <property type="organism name" value="human"/>
</dbReference>
<dbReference type="AGR" id="HGNC:4937"/>
<dbReference type="CTD" id="3112"/>
<dbReference type="DisGeNET" id="3112"/>
<dbReference type="GeneCards" id="HLA-DOB"/>
<dbReference type="HGNC" id="HGNC:4937">
    <property type="gene designation" value="HLA-DOB"/>
</dbReference>
<dbReference type="HPA" id="ENSG00000241106">
    <property type="expression patterns" value="Group enriched (intestine, lymphoid tissue)"/>
</dbReference>
<dbReference type="MIM" id="142920">
    <property type="type" value="gene"/>
</dbReference>
<dbReference type="MIM" id="600629">
    <property type="type" value="gene"/>
</dbReference>
<dbReference type="neXtProt" id="NX_P13765"/>
<dbReference type="OpenTargets" id="ENSG00000241106"/>
<dbReference type="PharmGKB" id="PA35061"/>
<dbReference type="VEuPathDB" id="HostDB:ENSG00000241106"/>
<dbReference type="eggNOG" id="ENOG502RWX2">
    <property type="taxonomic scope" value="Eukaryota"/>
</dbReference>
<dbReference type="GeneTree" id="ENSGT00940000162353"/>
<dbReference type="InParanoid" id="P13765"/>
<dbReference type="OMA" id="DIKITWF"/>
<dbReference type="OrthoDB" id="9940220at2759"/>
<dbReference type="PAN-GO" id="P13765">
    <property type="GO annotations" value="6 GO annotations based on evolutionary models"/>
</dbReference>
<dbReference type="PhylomeDB" id="P13765"/>
<dbReference type="TreeFam" id="TF336626"/>
<dbReference type="PathwayCommons" id="P13765"/>
<dbReference type="Reactome" id="R-HSA-2132295">
    <property type="pathway name" value="MHC class II antigen presentation"/>
</dbReference>
<dbReference type="SignaLink" id="P13765"/>
<dbReference type="SIGNOR" id="P13765"/>
<dbReference type="BioGRID-ORCS" id="3112">
    <property type="hits" value="11 hits in 1148 CRISPR screens"/>
</dbReference>
<dbReference type="ChiTaRS" id="HLA-DOB">
    <property type="organism name" value="human"/>
</dbReference>
<dbReference type="EvolutionaryTrace" id="P13765"/>
<dbReference type="GeneWiki" id="HLA-DOB"/>
<dbReference type="GenomeRNAi" id="3112"/>
<dbReference type="Pharos" id="P13765">
    <property type="development level" value="Tbio"/>
</dbReference>
<dbReference type="PRO" id="PR:P13765"/>
<dbReference type="Proteomes" id="UP000005640">
    <property type="component" value="Chromosome 6"/>
</dbReference>
<dbReference type="RNAct" id="P13765">
    <property type="molecule type" value="protein"/>
</dbReference>
<dbReference type="Bgee" id="ENSG00000241106">
    <property type="expression patterns" value="Expressed in lymph node and 93 other cell types or tissues"/>
</dbReference>
<dbReference type="ExpressionAtlas" id="P13765">
    <property type="expression patterns" value="baseline and differential"/>
</dbReference>
<dbReference type="GO" id="GO:0031902">
    <property type="term" value="C:late endosome membrane"/>
    <property type="evidence" value="ECO:0000318"/>
    <property type="project" value="GO_Central"/>
</dbReference>
<dbReference type="GO" id="GO:0005765">
    <property type="term" value="C:lysosomal membrane"/>
    <property type="evidence" value="ECO:0000318"/>
    <property type="project" value="GO_Central"/>
</dbReference>
<dbReference type="GO" id="GO:0005764">
    <property type="term" value="C:lysosome"/>
    <property type="evidence" value="ECO:0000314"/>
    <property type="project" value="MGI"/>
</dbReference>
<dbReference type="GO" id="GO:0042613">
    <property type="term" value="C:MHC class II protein complex"/>
    <property type="evidence" value="ECO:0000314"/>
    <property type="project" value="UniProtKB"/>
</dbReference>
<dbReference type="GO" id="GO:0023026">
    <property type="term" value="F:MHC class II protein complex binding"/>
    <property type="evidence" value="ECO:0000314"/>
    <property type="project" value="UniProtKB"/>
</dbReference>
<dbReference type="GO" id="GO:0032395">
    <property type="term" value="F:MHC class II receptor activity"/>
    <property type="evidence" value="ECO:0000304"/>
    <property type="project" value="UniProtKB"/>
</dbReference>
<dbReference type="GO" id="GO:0042605">
    <property type="term" value="F:peptide antigen binding"/>
    <property type="evidence" value="ECO:0000318"/>
    <property type="project" value="GO_Central"/>
</dbReference>
<dbReference type="GO" id="GO:0002250">
    <property type="term" value="P:adaptive immune response"/>
    <property type="evidence" value="ECO:0007669"/>
    <property type="project" value="UniProtKB-KW"/>
</dbReference>
<dbReference type="GO" id="GO:0019886">
    <property type="term" value="P:antigen processing and presentation of exogenous peptide antigen via MHC class II"/>
    <property type="evidence" value="ECO:0000318"/>
    <property type="project" value="GO_Central"/>
</dbReference>
<dbReference type="GO" id="GO:0002587">
    <property type="term" value="P:negative regulation of antigen processing and presentation of peptide antigen via MHC class II"/>
    <property type="evidence" value="ECO:0000314"/>
    <property type="project" value="UniProtKB"/>
</dbReference>
<dbReference type="GO" id="GO:0002503">
    <property type="term" value="P:peptide antigen assembly with MHC class II protein complex"/>
    <property type="evidence" value="ECO:0000318"/>
    <property type="project" value="GO_Central"/>
</dbReference>
<dbReference type="GO" id="GO:0050778">
    <property type="term" value="P:positive regulation of immune response"/>
    <property type="evidence" value="ECO:0000318"/>
    <property type="project" value="GO_Central"/>
</dbReference>
<dbReference type="GO" id="GO:0050870">
    <property type="term" value="P:positive regulation of T cell activation"/>
    <property type="evidence" value="ECO:0000318"/>
    <property type="project" value="GO_Central"/>
</dbReference>
<dbReference type="FunFam" id="2.60.40.10:FF:000116">
    <property type="entry name" value="HLA class II histocompatibility antigen, DRB1-1 beta chain"/>
    <property type="match status" value="1"/>
</dbReference>
<dbReference type="FunFam" id="3.10.320.10:FF:000001">
    <property type="entry name" value="HLA class II histocompatibility antigen, DRB1-1 beta chain"/>
    <property type="match status" value="1"/>
</dbReference>
<dbReference type="Gene3D" id="3.10.320.10">
    <property type="entry name" value="Class II Histocompatibility Antigen, M Beta Chain, Chain B, domain 1"/>
    <property type="match status" value="1"/>
</dbReference>
<dbReference type="Gene3D" id="2.60.40.10">
    <property type="entry name" value="Immunoglobulins"/>
    <property type="match status" value="1"/>
</dbReference>
<dbReference type="InterPro" id="IPR007110">
    <property type="entry name" value="Ig-like_dom"/>
</dbReference>
<dbReference type="InterPro" id="IPR036179">
    <property type="entry name" value="Ig-like_dom_sf"/>
</dbReference>
<dbReference type="InterPro" id="IPR013783">
    <property type="entry name" value="Ig-like_fold"/>
</dbReference>
<dbReference type="InterPro" id="IPR003006">
    <property type="entry name" value="Ig/MHC_CS"/>
</dbReference>
<dbReference type="InterPro" id="IPR003597">
    <property type="entry name" value="Ig_C1-set"/>
</dbReference>
<dbReference type="InterPro" id="IPR050160">
    <property type="entry name" value="MHC/Immunoglobulin"/>
</dbReference>
<dbReference type="InterPro" id="IPR011162">
    <property type="entry name" value="MHC_I/II-like_Ag-recog"/>
</dbReference>
<dbReference type="InterPro" id="IPR014745">
    <property type="entry name" value="MHC_II_a/b_N"/>
</dbReference>
<dbReference type="InterPro" id="IPR000353">
    <property type="entry name" value="MHC_II_b_N"/>
</dbReference>
<dbReference type="PANTHER" id="PTHR19944:SF43">
    <property type="entry name" value="HLA CLASS II HISTOCOMPATIBILITY ANTIGEN, DO BETA CHAIN"/>
    <property type="match status" value="1"/>
</dbReference>
<dbReference type="PANTHER" id="PTHR19944">
    <property type="entry name" value="MHC CLASS II-RELATED"/>
    <property type="match status" value="1"/>
</dbReference>
<dbReference type="Pfam" id="PF07654">
    <property type="entry name" value="C1-set"/>
    <property type="match status" value="1"/>
</dbReference>
<dbReference type="Pfam" id="PF00969">
    <property type="entry name" value="MHC_II_beta"/>
    <property type="match status" value="1"/>
</dbReference>
<dbReference type="SMART" id="SM00407">
    <property type="entry name" value="IGc1"/>
    <property type="match status" value="1"/>
</dbReference>
<dbReference type="SMART" id="SM00921">
    <property type="entry name" value="MHC_II_beta"/>
    <property type="match status" value="1"/>
</dbReference>
<dbReference type="SUPFAM" id="SSF48726">
    <property type="entry name" value="Immunoglobulin"/>
    <property type="match status" value="1"/>
</dbReference>
<dbReference type="SUPFAM" id="SSF54452">
    <property type="entry name" value="MHC antigen-recognition domain"/>
    <property type="match status" value="1"/>
</dbReference>
<dbReference type="PROSITE" id="PS50835">
    <property type="entry name" value="IG_LIKE"/>
    <property type="match status" value="1"/>
</dbReference>
<dbReference type="PROSITE" id="PS00290">
    <property type="entry name" value="IG_MHC"/>
    <property type="match status" value="1"/>
</dbReference>
<accession>P13765</accession>
<accession>B0V0Y0</accession>
<accession>Q29746</accession>
<accession>Q29825</accession>
<accession>Q6FHC2</accession>
<proteinExistence type="evidence at protein level"/>
<feature type="signal peptide">
    <location>
        <begin position="1"/>
        <end position="26"/>
    </location>
</feature>
<feature type="chain" id="PRO_0000018963" description="HLA class II histocompatibility antigen, DO beta chain">
    <location>
        <begin position="27"/>
        <end position="273"/>
    </location>
</feature>
<feature type="topological domain" description="Extracellular" evidence="1">
    <location>
        <begin position="27"/>
        <end position="224"/>
    </location>
</feature>
<feature type="transmembrane region" description="Helical" evidence="1">
    <location>
        <begin position="225"/>
        <end position="245"/>
    </location>
</feature>
<feature type="topological domain" description="Cytoplasmic" evidence="1">
    <location>
        <begin position="246"/>
        <end position="273"/>
    </location>
</feature>
<feature type="domain" description="Ig-like C1-type">
    <location>
        <begin position="123"/>
        <end position="213"/>
    </location>
</feature>
<feature type="region of interest" description="Beta-1">
    <location>
        <begin position="27"/>
        <end position="120"/>
    </location>
</feature>
<feature type="region of interest" description="Beta-2">
    <location>
        <begin position="121"/>
        <end position="214"/>
    </location>
</feature>
<feature type="region of interest" description="Connecting peptide">
    <location>
        <begin position="215"/>
        <end position="224"/>
    </location>
</feature>
<feature type="glycosylation site" description="N-linked (GlcNAc...) asparagine" evidence="1">
    <location>
        <position position="45"/>
    </location>
</feature>
<feature type="disulfide bond" evidence="2">
    <location>
        <begin position="41"/>
        <end position="105"/>
    </location>
</feature>
<feature type="disulfide bond" evidence="2">
    <location>
        <begin position="143"/>
        <end position="199"/>
    </location>
</feature>
<feature type="sequence variant" id="VAR_016743" description="In allele DOB*01:02; dbSNP:rs2071554.">
    <original>R</original>
    <variation>Q</variation>
    <location>
        <position position="18"/>
    </location>
</feature>
<feature type="sequence variant" id="VAR_050363" description="In dbSNP:rs11575907." evidence="3 4">
    <original>V</original>
    <variation>I</variation>
    <location>
        <position position="210"/>
    </location>
</feature>
<feature type="sequence variant" id="VAR_016745" description="In allele DOB*01:04; dbSNP:rs2070121.">
    <original>L</original>
    <variation>F</variation>
    <location>
        <position position="234"/>
    </location>
</feature>
<feature type="sequence variant" id="VAR_016744" description="In allele DOB*01:03; dbSNP:rs2621330.">
    <original>V</original>
    <variation>I</variation>
    <location>
        <position position="244"/>
    </location>
</feature>
<feature type="strand" evidence="6">
    <location>
        <begin position="34"/>
        <end position="44"/>
    </location>
</feature>
<feature type="turn" evidence="6">
    <location>
        <begin position="45"/>
        <end position="48"/>
    </location>
</feature>
<feature type="strand" evidence="6">
    <location>
        <begin position="49"/>
        <end position="58"/>
    </location>
</feature>
<feature type="strand" evidence="6">
    <location>
        <begin position="61"/>
        <end position="67"/>
    </location>
</feature>
<feature type="turn" evidence="6">
    <location>
        <begin position="68"/>
        <end position="70"/>
    </location>
</feature>
<feature type="strand" evidence="6">
    <location>
        <begin position="72"/>
        <end position="75"/>
    </location>
</feature>
<feature type="helix" evidence="6">
    <location>
        <begin position="78"/>
        <end position="80"/>
    </location>
</feature>
<feature type="helix" evidence="6">
    <location>
        <begin position="81"/>
        <end position="89"/>
    </location>
</feature>
<feature type="helix" evidence="6">
    <location>
        <begin position="91"/>
        <end position="103"/>
    </location>
</feature>
<feature type="helix" evidence="6">
    <location>
        <begin position="105"/>
        <end position="112"/>
    </location>
</feature>
<feature type="helix" evidence="6">
    <location>
        <begin position="113"/>
        <end position="115"/>
    </location>
</feature>
<feature type="turn" evidence="6">
    <location>
        <begin position="116"/>
        <end position="118"/>
    </location>
</feature>
<feature type="strand" evidence="6">
    <location>
        <begin position="124"/>
        <end position="131"/>
    </location>
</feature>
<feature type="strand" evidence="6">
    <location>
        <begin position="139"/>
        <end position="151"/>
    </location>
</feature>
<feature type="strand" evidence="6">
    <location>
        <begin position="154"/>
        <end position="159"/>
    </location>
</feature>
<feature type="strand" evidence="6">
    <location>
        <begin position="166"/>
        <end position="169"/>
    </location>
</feature>
<feature type="strand" evidence="6">
    <location>
        <begin position="177"/>
        <end position="179"/>
    </location>
</feature>
<feature type="strand" evidence="6">
    <location>
        <begin position="181"/>
        <end position="189"/>
    </location>
</feature>
<feature type="strand" evidence="6">
    <location>
        <begin position="197"/>
        <end position="202"/>
    </location>
</feature>
<feature type="strand" evidence="6">
    <location>
        <begin position="210"/>
        <end position="214"/>
    </location>
</feature>
<reference key="1">
    <citation type="journal article" date="1985" name="EMBO J.">
        <title>DO beta: a new beta chain gene in HLA-D with a distinct regulation of expression.</title>
        <authorList>
            <person name="Tonnelle C."/>
            <person name="Demars R."/>
            <person name="Long E.O."/>
        </authorList>
    </citation>
    <scope>NUCLEOTIDE SEQUENCE [MRNA] (ALLELE DOB*01:01)</scope>
</reference>
<reference key="2">
    <citation type="journal article" date="1989" name="Immunogenetics">
        <title>Human class II DNA and DOB genes display low sequence variability.</title>
        <authorList>
            <person name="Jonsson A.-K."/>
            <person name="Rask L."/>
        </authorList>
    </citation>
    <scope>NUCLEOTIDE SEQUENCE [MRNA] (ALLELE DOB*01:01)</scope>
</reference>
<reference key="3">
    <citation type="journal article" date="1992" name="J. Mol. Biol.">
        <title>DNA sequence analysis of 66 kb of the human MHC class II region encoding a cluster of genes for antigen processing.</title>
        <authorList>
            <person name="Beck S."/>
            <person name="Kelly A."/>
            <person name="Radley E."/>
            <person name="Khurshid F."/>
            <person name="Alderton R.P."/>
            <person name="Trowsdale J."/>
        </authorList>
    </citation>
    <scope>NUCLEOTIDE SEQUENCE [GENOMIC DNA] (ALLELE DOB*01:01)</scope>
</reference>
<reference key="4">
    <citation type="submission" date="2004-06" db="EMBL/GenBank/DDBJ databases">
        <title>Cloning of human full open reading frames in Gateway(TM) system entry vector (pDONR201).</title>
        <authorList>
            <person name="Ebert L."/>
            <person name="Schick M."/>
            <person name="Neubert P."/>
            <person name="Schatten R."/>
            <person name="Henze S."/>
            <person name="Korn B."/>
        </authorList>
    </citation>
    <scope>NUCLEOTIDE SEQUENCE [LARGE SCALE MRNA]</scope>
    <scope>VARIANT ILE-210</scope>
</reference>
<reference key="5">
    <citation type="journal article" date="2003" name="Nature">
        <title>The DNA sequence and analysis of human chromosome 6.</title>
        <authorList>
            <person name="Mungall A.J."/>
            <person name="Palmer S.A."/>
            <person name="Sims S.K."/>
            <person name="Edwards C.A."/>
            <person name="Ashurst J.L."/>
            <person name="Wilming L."/>
            <person name="Jones M.C."/>
            <person name="Horton R."/>
            <person name="Hunt S.E."/>
            <person name="Scott C.E."/>
            <person name="Gilbert J.G.R."/>
            <person name="Clamp M.E."/>
            <person name="Bethel G."/>
            <person name="Milne S."/>
            <person name="Ainscough R."/>
            <person name="Almeida J.P."/>
            <person name="Ambrose K.D."/>
            <person name="Andrews T.D."/>
            <person name="Ashwell R.I.S."/>
            <person name="Babbage A.K."/>
            <person name="Bagguley C.L."/>
            <person name="Bailey J."/>
            <person name="Banerjee R."/>
            <person name="Barker D.J."/>
            <person name="Barlow K.F."/>
            <person name="Bates K."/>
            <person name="Beare D.M."/>
            <person name="Beasley H."/>
            <person name="Beasley O."/>
            <person name="Bird C.P."/>
            <person name="Blakey S.E."/>
            <person name="Bray-Allen S."/>
            <person name="Brook J."/>
            <person name="Brown A.J."/>
            <person name="Brown J.Y."/>
            <person name="Burford D.C."/>
            <person name="Burrill W."/>
            <person name="Burton J."/>
            <person name="Carder C."/>
            <person name="Carter N.P."/>
            <person name="Chapman J.C."/>
            <person name="Clark S.Y."/>
            <person name="Clark G."/>
            <person name="Clee C.M."/>
            <person name="Clegg S."/>
            <person name="Cobley V."/>
            <person name="Collier R.E."/>
            <person name="Collins J.E."/>
            <person name="Colman L.K."/>
            <person name="Corby N.R."/>
            <person name="Coville G.J."/>
            <person name="Culley K.M."/>
            <person name="Dhami P."/>
            <person name="Davies J."/>
            <person name="Dunn M."/>
            <person name="Earthrowl M.E."/>
            <person name="Ellington A.E."/>
            <person name="Evans K.A."/>
            <person name="Faulkner L."/>
            <person name="Francis M.D."/>
            <person name="Frankish A."/>
            <person name="Frankland J."/>
            <person name="French L."/>
            <person name="Garner P."/>
            <person name="Garnett J."/>
            <person name="Ghori M.J."/>
            <person name="Gilby L.M."/>
            <person name="Gillson C.J."/>
            <person name="Glithero R.J."/>
            <person name="Grafham D.V."/>
            <person name="Grant M."/>
            <person name="Gribble S."/>
            <person name="Griffiths C."/>
            <person name="Griffiths M.N.D."/>
            <person name="Hall R."/>
            <person name="Halls K.S."/>
            <person name="Hammond S."/>
            <person name="Harley J.L."/>
            <person name="Hart E.A."/>
            <person name="Heath P.D."/>
            <person name="Heathcott R."/>
            <person name="Holmes S.J."/>
            <person name="Howden P.J."/>
            <person name="Howe K.L."/>
            <person name="Howell G.R."/>
            <person name="Huckle E."/>
            <person name="Humphray S.J."/>
            <person name="Humphries M.D."/>
            <person name="Hunt A.R."/>
            <person name="Johnson C.M."/>
            <person name="Joy A.A."/>
            <person name="Kay M."/>
            <person name="Keenan S.J."/>
            <person name="Kimberley A.M."/>
            <person name="King A."/>
            <person name="Laird G.K."/>
            <person name="Langford C."/>
            <person name="Lawlor S."/>
            <person name="Leongamornlert D.A."/>
            <person name="Leversha M."/>
            <person name="Lloyd C.R."/>
            <person name="Lloyd D.M."/>
            <person name="Loveland J.E."/>
            <person name="Lovell J."/>
            <person name="Martin S."/>
            <person name="Mashreghi-Mohammadi M."/>
            <person name="Maslen G.L."/>
            <person name="Matthews L."/>
            <person name="McCann O.T."/>
            <person name="McLaren S.J."/>
            <person name="McLay K."/>
            <person name="McMurray A."/>
            <person name="Moore M.J.F."/>
            <person name="Mullikin J.C."/>
            <person name="Niblett D."/>
            <person name="Nickerson T."/>
            <person name="Novik K.L."/>
            <person name="Oliver K."/>
            <person name="Overton-Larty E.K."/>
            <person name="Parker A."/>
            <person name="Patel R."/>
            <person name="Pearce A.V."/>
            <person name="Peck A.I."/>
            <person name="Phillimore B.J.C.T."/>
            <person name="Phillips S."/>
            <person name="Plumb R.W."/>
            <person name="Porter K.M."/>
            <person name="Ramsey Y."/>
            <person name="Ranby S.A."/>
            <person name="Rice C.M."/>
            <person name="Ross M.T."/>
            <person name="Searle S.M."/>
            <person name="Sehra H.K."/>
            <person name="Sheridan E."/>
            <person name="Skuce C.D."/>
            <person name="Smith S."/>
            <person name="Smith M."/>
            <person name="Spraggon L."/>
            <person name="Squares S.L."/>
            <person name="Steward C.A."/>
            <person name="Sycamore N."/>
            <person name="Tamlyn-Hall G."/>
            <person name="Tester J."/>
            <person name="Theaker A.J."/>
            <person name="Thomas D.W."/>
            <person name="Thorpe A."/>
            <person name="Tracey A."/>
            <person name="Tromans A."/>
            <person name="Tubby B."/>
            <person name="Wall M."/>
            <person name="Wallis J.M."/>
            <person name="West A.P."/>
            <person name="White S.S."/>
            <person name="Whitehead S.L."/>
            <person name="Whittaker H."/>
            <person name="Wild A."/>
            <person name="Willey D.J."/>
            <person name="Wilmer T.E."/>
            <person name="Wood J.M."/>
            <person name="Wray P.W."/>
            <person name="Wyatt J.C."/>
            <person name="Young L."/>
            <person name="Younger R.M."/>
            <person name="Bentley D.R."/>
            <person name="Coulson A."/>
            <person name="Durbin R.M."/>
            <person name="Hubbard T."/>
            <person name="Sulston J.E."/>
            <person name="Dunham I."/>
            <person name="Rogers J."/>
            <person name="Beck S."/>
        </authorList>
    </citation>
    <scope>NUCLEOTIDE SEQUENCE [LARGE SCALE GENOMIC DNA]</scope>
    <scope>VARIANT ILE-210</scope>
</reference>
<reference key="6">
    <citation type="journal article" date="2004" name="Genome Res.">
        <title>The status, quality, and expansion of the NIH full-length cDNA project: the Mammalian Gene Collection (MGC).</title>
        <authorList>
            <consortium name="The MGC Project Team"/>
        </authorList>
    </citation>
    <scope>NUCLEOTIDE SEQUENCE [LARGE SCALE MRNA] (ALLELE DOB*01:01)</scope>
    <source>
        <tissue>B-cell</tissue>
    </source>
</reference>
<reference key="7">
    <citation type="journal article" date="1987" name="J. Biol. Chem.">
        <title>Class II genes of the human major histocompatibility complex. The DO beta gene is a divergent member of the class II beta gene family.</title>
        <authorList>
            <person name="Servenius B."/>
            <person name="Rask L."/>
            <person name="Peterson P.A."/>
        </authorList>
    </citation>
    <scope>NUCLEOTIDE SEQUENCE [GENOMIC DNA] (ALLELE DOB*01:02)</scope>
</reference>
<reference key="8">
    <citation type="journal article" date="1996" name="J. Mol. Biol.">
        <title>Evolutionary dynamics of non-coding sequences within the class II region of the human MHC.</title>
        <authorList>
            <person name="Beck S."/>
            <person name="Abdulla S."/>
            <person name="Alderton R.P."/>
            <person name="Glynne R.J."/>
            <person name="Gut I.G."/>
            <person name="Hosking L.K."/>
            <person name="Jackson A."/>
            <person name="Kelly A."/>
            <person name="Newell W.R."/>
            <person name="Sanseau P."/>
            <person name="Radley E."/>
            <person name="Thorpe K.L."/>
            <person name="Trowsdale J."/>
        </authorList>
    </citation>
    <scope>NUCLEOTIDE SEQUENCE [GENOMIC DNA] (ALLELE DOB*01:03)</scope>
</reference>
<reference key="9">
    <citation type="journal article" date="2002" name="Tissue Antigens">
        <title>The HLA-DOB gene displays limited polymorphism with only one amino acid substitution.</title>
        <authorList>
            <person name="Naruse T.K."/>
            <person name="Kawata H."/>
            <person name="Inoko H."/>
            <person name="Isshiki G."/>
            <person name="Yamano K."/>
            <person name="Hino M."/>
            <person name="Tatsumi N."/>
        </authorList>
    </citation>
    <scope>NUCLEOTIDE SEQUENCE [GENOMIC DNA] OF 32-273 (ALLELE DOB*01:04)</scope>
</reference>
<reference key="10">
    <citation type="journal article" date="2000" name="Annu. Rev. Immunol.">
        <title>Nonclassical MHC class II molecules.</title>
        <authorList>
            <person name="Alfonso C."/>
            <person name="Karlsson L."/>
        </authorList>
    </citation>
    <scope>REVIEW</scope>
</reference>
<protein>
    <recommendedName>
        <fullName>HLA class II histocompatibility antigen, DO beta chain</fullName>
    </recommendedName>
    <alternativeName>
        <fullName>MHC class II antigen DOB</fullName>
    </alternativeName>
</protein>
<gene>
    <name type="primary">HLA-DOB</name>
</gene>
<keyword id="KW-0002">3D-structure</keyword>
<keyword id="KW-1064">Adaptive immunity</keyword>
<keyword id="KW-1015">Disulfide bond</keyword>
<keyword id="KW-0967">Endosome</keyword>
<keyword id="KW-0325">Glycoprotein</keyword>
<keyword id="KW-0391">Immunity</keyword>
<keyword id="KW-0458">Lysosome</keyword>
<keyword id="KW-0472">Membrane</keyword>
<keyword id="KW-0491">MHC II</keyword>
<keyword id="KW-1267">Proteomics identification</keyword>
<keyword id="KW-1185">Reference proteome</keyword>
<keyword id="KW-0732">Signal</keyword>
<keyword id="KW-0812">Transmembrane</keyword>
<keyword id="KW-1133">Transmembrane helix</keyword>